<protein>
    <recommendedName>
        <fullName evidence="1">Small ribosomal subunit protein uS13</fullName>
    </recommendedName>
    <alternativeName>
        <fullName evidence="3">30S ribosomal protein S13</fullName>
    </alternativeName>
</protein>
<reference key="1">
    <citation type="submission" date="2007-07" db="EMBL/GenBank/DDBJ databases">
        <title>Complete sequence of chromosome of Xanthobacter autotrophicus Py2.</title>
        <authorList>
            <consortium name="US DOE Joint Genome Institute"/>
            <person name="Copeland A."/>
            <person name="Lucas S."/>
            <person name="Lapidus A."/>
            <person name="Barry K."/>
            <person name="Glavina del Rio T."/>
            <person name="Hammon N."/>
            <person name="Israni S."/>
            <person name="Dalin E."/>
            <person name="Tice H."/>
            <person name="Pitluck S."/>
            <person name="Sims D."/>
            <person name="Brettin T."/>
            <person name="Bruce D."/>
            <person name="Detter J.C."/>
            <person name="Han C."/>
            <person name="Tapia R."/>
            <person name="Brainard J."/>
            <person name="Schmutz J."/>
            <person name="Larimer F."/>
            <person name="Land M."/>
            <person name="Hauser L."/>
            <person name="Kyrpides N."/>
            <person name="Kim E."/>
            <person name="Ensigns S.A."/>
            <person name="Richardson P."/>
        </authorList>
    </citation>
    <scope>NUCLEOTIDE SEQUENCE [LARGE SCALE GENOMIC DNA]</scope>
    <source>
        <strain>ATCC BAA-1158 / Py2</strain>
    </source>
</reference>
<organism>
    <name type="scientific">Xanthobacter autotrophicus (strain ATCC BAA-1158 / Py2)</name>
    <dbReference type="NCBI Taxonomy" id="78245"/>
    <lineage>
        <taxon>Bacteria</taxon>
        <taxon>Pseudomonadati</taxon>
        <taxon>Pseudomonadota</taxon>
        <taxon>Alphaproteobacteria</taxon>
        <taxon>Hyphomicrobiales</taxon>
        <taxon>Xanthobacteraceae</taxon>
        <taxon>Xanthobacter</taxon>
    </lineage>
</organism>
<feature type="chain" id="PRO_1000141331" description="Small ribosomal subunit protein uS13">
    <location>
        <begin position="1"/>
        <end position="122"/>
    </location>
</feature>
<feature type="region of interest" description="Disordered" evidence="2">
    <location>
        <begin position="95"/>
        <end position="122"/>
    </location>
</feature>
<keyword id="KW-1185">Reference proteome</keyword>
<keyword id="KW-0687">Ribonucleoprotein</keyword>
<keyword id="KW-0689">Ribosomal protein</keyword>
<keyword id="KW-0694">RNA-binding</keyword>
<keyword id="KW-0699">rRNA-binding</keyword>
<keyword id="KW-0820">tRNA-binding</keyword>
<gene>
    <name evidence="1" type="primary">rpsM</name>
    <name type="ordered locus">Xaut_4776</name>
</gene>
<name>RS13_XANP2</name>
<dbReference type="EMBL" id="CP000781">
    <property type="protein sequence ID" value="ABS69994.1"/>
    <property type="molecule type" value="Genomic_DNA"/>
</dbReference>
<dbReference type="SMR" id="A7IPP8"/>
<dbReference type="STRING" id="78245.Xaut_4776"/>
<dbReference type="KEGG" id="xau:Xaut_4776"/>
<dbReference type="eggNOG" id="COG0099">
    <property type="taxonomic scope" value="Bacteria"/>
</dbReference>
<dbReference type="HOGENOM" id="CLU_103849_1_2_5"/>
<dbReference type="OrthoDB" id="9803610at2"/>
<dbReference type="PhylomeDB" id="A7IPP8"/>
<dbReference type="Proteomes" id="UP000002417">
    <property type="component" value="Chromosome"/>
</dbReference>
<dbReference type="GO" id="GO:0005829">
    <property type="term" value="C:cytosol"/>
    <property type="evidence" value="ECO:0007669"/>
    <property type="project" value="TreeGrafter"/>
</dbReference>
<dbReference type="GO" id="GO:0015935">
    <property type="term" value="C:small ribosomal subunit"/>
    <property type="evidence" value="ECO:0007669"/>
    <property type="project" value="TreeGrafter"/>
</dbReference>
<dbReference type="GO" id="GO:0019843">
    <property type="term" value="F:rRNA binding"/>
    <property type="evidence" value="ECO:0007669"/>
    <property type="project" value="UniProtKB-UniRule"/>
</dbReference>
<dbReference type="GO" id="GO:0003735">
    <property type="term" value="F:structural constituent of ribosome"/>
    <property type="evidence" value="ECO:0007669"/>
    <property type="project" value="InterPro"/>
</dbReference>
<dbReference type="GO" id="GO:0000049">
    <property type="term" value="F:tRNA binding"/>
    <property type="evidence" value="ECO:0007669"/>
    <property type="project" value="UniProtKB-UniRule"/>
</dbReference>
<dbReference type="GO" id="GO:0006412">
    <property type="term" value="P:translation"/>
    <property type="evidence" value="ECO:0007669"/>
    <property type="project" value="UniProtKB-UniRule"/>
</dbReference>
<dbReference type="FunFam" id="1.10.8.50:FF:000001">
    <property type="entry name" value="30S ribosomal protein S13"/>
    <property type="match status" value="1"/>
</dbReference>
<dbReference type="FunFam" id="4.10.910.10:FF:000001">
    <property type="entry name" value="30S ribosomal protein S13"/>
    <property type="match status" value="1"/>
</dbReference>
<dbReference type="Gene3D" id="1.10.8.50">
    <property type="match status" value="1"/>
</dbReference>
<dbReference type="Gene3D" id="4.10.910.10">
    <property type="entry name" value="30s ribosomal protein s13, domain 2"/>
    <property type="match status" value="1"/>
</dbReference>
<dbReference type="HAMAP" id="MF_01315">
    <property type="entry name" value="Ribosomal_uS13"/>
    <property type="match status" value="1"/>
</dbReference>
<dbReference type="InterPro" id="IPR027437">
    <property type="entry name" value="Rbsml_uS13_C"/>
</dbReference>
<dbReference type="InterPro" id="IPR001892">
    <property type="entry name" value="Ribosomal_uS13"/>
</dbReference>
<dbReference type="InterPro" id="IPR010979">
    <property type="entry name" value="Ribosomal_uS13-like_H2TH"/>
</dbReference>
<dbReference type="InterPro" id="IPR019980">
    <property type="entry name" value="Ribosomal_uS13_bac-type"/>
</dbReference>
<dbReference type="InterPro" id="IPR018269">
    <property type="entry name" value="Ribosomal_uS13_CS"/>
</dbReference>
<dbReference type="NCBIfam" id="TIGR03631">
    <property type="entry name" value="uS13_bact"/>
    <property type="match status" value="1"/>
</dbReference>
<dbReference type="PANTHER" id="PTHR10871">
    <property type="entry name" value="30S RIBOSOMAL PROTEIN S13/40S RIBOSOMAL PROTEIN S18"/>
    <property type="match status" value="1"/>
</dbReference>
<dbReference type="PANTHER" id="PTHR10871:SF1">
    <property type="entry name" value="SMALL RIBOSOMAL SUBUNIT PROTEIN US13M"/>
    <property type="match status" value="1"/>
</dbReference>
<dbReference type="Pfam" id="PF00416">
    <property type="entry name" value="Ribosomal_S13"/>
    <property type="match status" value="1"/>
</dbReference>
<dbReference type="PIRSF" id="PIRSF002134">
    <property type="entry name" value="Ribosomal_S13"/>
    <property type="match status" value="1"/>
</dbReference>
<dbReference type="SUPFAM" id="SSF46946">
    <property type="entry name" value="S13-like H2TH domain"/>
    <property type="match status" value="1"/>
</dbReference>
<dbReference type="PROSITE" id="PS00646">
    <property type="entry name" value="RIBOSOMAL_S13_1"/>
    <property type="match status" value="1"/>
</dbReference>
<dbReference type="PROSITE" id="PS50159">
    <property type="entry name" value="RIBOSOMAL_S13_2"/>
    <property type="match status" value="1"/>
</dbReference>
<sequence>MARIAGVNIPTNKRVIIALQYIHGIGAKNAEEIVTKVGIPAERRVNQLTDQEVLQIRETIDRDYVVEGDLRREVAMNIKRLMDLGCYRGLRHRRGLPVRGQRTHTNARTRKGPAKPIAGKKK</sequence>
<proteinExistence type="inferred from homology"/>
<accession>A7IPP8</accession>
<evidence type="ECO:0000255" key="1">
    <source>
        <dbReference type="HAMAP-Rule" id="MF_01315"/>
    </source>
</evidence>
<evidence type="ECO:0000256" key="2">
    <source>
        <dbReference type="SAM" id="MobiDB-lite"/>
    </source>
</evidence>
<evidence type="ECO:0000305" key="3"/>
<comment type="function">
    <text evidence="1">Located at the top of the head of the 30S subunit, it contacts several helices of the 16S rRNA. In the 70S ribosome it contacts the 23S rRNA (bridge B1a) and protein L5 of the 50S subunit (bridge B1b), connecting the 2 subunits; these bridges are implicated in subunit movement. Contacts the tRNAs in the A and P-sites.</text>
</comment>
<comment type="subunit">
    <text evidence="1">Part of the 30S ribosomal subunit. Forms a loose heterodimer with protein S19. Forms two bridges to the 50S subunit in the 70S ribosome.</text>
</comment>
<comment type="similarity">
    <text evidence="1">Belongs to the universal ribosomal protein uS13 family.</text>
</comment>